<proteinExistence type="inferred from homology"/>
<accession>A7Z1S7</accession>
<sequence length="345" mass="39056">MYDTIVIGAGQAGISVGYYLKKSKQKFIILDKSHEVGESWKNRYDSLVLFTSRMYSSLPGMQLEGDKHGLPSKNEIAAYLKKYVERFEIPIQLRTEVISVQKLKNYFLIKTNREEYQTKNLVMAAGPFHTPNIPSISRDVADHIHQLHSSQYKHSKQLAPGNVLVVGGGNSGAQIAVELSKERVTYLACSNKPVYFPLWIGKRSIFWWFDKLGVLHASHTSILGKFIQKKGDPIFGYELKHAIRQKKIILKQRVIAGKQNEMIFKDSSSLEVNNIIWATGFKNPLCWMKIEGVLDKEGRIIHHRGVSAVEGLYFIGLPWQHRRGSALLQGVGNDAEYIVKQMNGG</sequence>
<name>CZCO_BACVZ</name>
<evidence type="ECO:0000250" key="1"/>
<evidence type="ECO:0000305" key="2"/>
<comment type="function">
    <text evidence="1">Involved in potassium and divalent cation transport. Enhances the transport activity of the cation/potassium transporter CzcD (By similarity).</text>
</comment>
<comment type="subcellular location">
    <subcellularLocation>
        <location evidence="2">Cell membrane</location>
        <topology evidence="2">Peripheral membrane protein</topology>
        <orientation evidence="2">Cytoplasmic side</orientation>
    </subcellularLocation>
</comment>
<dbReference type="EC" id="1.-.-.-"/>
<dbReference type="EMBL" id="CP000560">
    <property type="protein sequence ID" value="ABS72953.1"/>
    <property type="molecule type" value="Genomic_DNA"/>
</dbReference>
<dbReference type="RefSeq" id="WP_012116910.1">
    <property type="nucleotide sequence ID" value="NC_009725.2"/>
</dbReference>
<dbReference type="SMR" id="A7Z1S7"/>
<dbReference type="GeneID" id="93079694"/>
<dbReference type="KEGG" id="bay:RBAM_005610"/>
<dbReference type="HOGENOM" id="CLU_006909_1_0_9"/>
<dbReference type="Proteomes" id="UP000001120">
    <property type="component" value="Chromosome"/>
</dbReference>
<dbReference type="GO" id="GO:0005886">
    <property type="term" value="C:plasma membrane"/>
    <property type="evidence" value="ECO:0007669"/>
    <property type="project" value="UniProtKB-SubCell"/>
</dbReference>
<dbReference type="GO" id="GO:0050660">
    <property type="term" value="F:flavin adenine dinucleotide binding"/>
    <property type="evidence" value="ECO:0007669"/>
    <property type="project" value="TreeGrafter"/>
</dbReference>
<dbReference type="GO" id="GO:0004497">
    <property type="term" value="F:monooxygenase activity"/>
    <property type="evidence" value="ECO:0007669"/>
    <property type="project" value="TreeGrafter"/>
</dbReference>
<dbReference type="GO" id="GO:0006824">
    <property type="term" value="P:cobalt ion transport"/>
    <property type="evidence" value="ECO:0007669"/>
    <property type="project" value="UniProtKB-KW"/>
</dbReference>
<dbReference type="GO" id="GO:0006813">
    <property type="term" value="P:potassium ion transport"/>
    <property type="evidence" value="ECO:0007669"/>
    <property type="project" value="UniProtKB-KW"/>
</dbReference>
<dbReference type="GO" id="GO:0006829">
    <property type="term" value="P:zinc ion transport"/>
    <property type="evidence" value="ECO:0007669"/>
    <property type="project" value="UniProtKB-KW"/>
</dbReference>
<dbReference type="Gene3D" id="3.50.50.60">
    <property type="entry name" value="FAD/NAD(P)-binding domain"/>
    <property type="match status" value="1"/>
</dbReference>
<dbReference type="InterPro" id="IPR050982">
    <property type="entry name" value="Auxin_biosynth/cation_transpt"/>
</dbReference>
<dbReference type="InterPro" id="IPR036188">
    <property type="entry name" value="FAD/NAD-bd_sf"/>
</dbReference>
<dbReference type="PANTHER" id="PTHR43539">
    <property type="entry name" value="FLAVIN-BINDING MONOOXYGENASE-LIKE PROTEIN (AFU_ORTHOLOGUE AFUA_4G09220)"/>
    <property type="match status" value="1"/>
</dbReference>
<dbReference type="PANTHER" id="PTHR43539:SF78">
    <property type="entry name" value="FLAVIN-CONTAINING MONOOXYGENASE"/>
    <property type="match status" value="1"/>
</dbReference>
<dbReference type="Pfam" id="PF13738">
    <property type="entry name" value="Pyr_redox_3"/>
    <property type="match status" value="1"/>
</dbReference>
<dbReference type="PRINTS" id="PR00368">
    <property type="entry name" value="FADPNR"/>
</dbReference>
<dbReference type="PRINTS" id="PR00469">
    <property type="entry name" value="PNDRDTASEII"/>
</dbReference>
<dbReference type="SUPFAM" id="SSF51905">
    <property type="entry name" value="FAD/NAD(P)-binding domain"/>
    <property type="match status" value="2"/>
</dbReference>
<gene>
    <name type="primary">czcO</name>
    <name type="ordered locus">RBAM_005610</name>
</gene>
<keyword id="KW-0104">Cadmium</keyword>
<keyword id="KW-1003">Cell membrane</keyword>
<keyword id="KW-0170">Cobalt</keyword>
<keyword id="KW-0171">Cobalt transport</keyword>
<keyword id="KW-0406">Ion transport</keyword>
<keyword id="KW-0472">Membrane</keyword>
<keyword id="KW-0560">Oxidoreductase</keyword>
<keyword id="KW-0630">Potassium</keyword>
<keyword id="KW-0633">Potassium transport</keyword>
<keyword id="KW-0813">Transport</keyword>
<keyword id="KW-0862">Zinc</keyword>
<keyword id="KW-0864">Zinc transport</keyword>
<feature type="chain" id="PRO_0000337069" description="Uncharacterized oxidoreductase CzcO">
    <location>
        <begin position="1"/>
        <end position="345"/>
    </location>
</feature>
<protein>
    <recommendedName>
        <fullName>Uncharacterized oxidoreductase CzcO</fullName>
        <ecNumber>1.-.-.-</ecNumber>
    </recommendedName>
</protein>
<organism>
    <name type="scientific">Bacillus velezensis (strain DSM 23117 / BGSC 10A6 / LMG 26770 / FZB42)</name>
    <name type="common">Bacillus amyloliquefaciens subsp. plantarum</name>
    <dbReference type="NCBI Taxonomy" id="326423"/>
    <lineage>
        <taxon>Bacteria</taxon>
        <taxon>Bacillati</taxon>
        <taxon>Bacillota</taxon>
        <taxon>Bacilli</taxon>
        <taxon>Bacillales</taxon>
        <taxon>Bacillaceae</taxon>
        <taxon>Bacillus</taxon>
        <taxon>Bacillus amyloliquefaciens group</taxon>
    </lineage>
</organism>
<reference key="1">
    <citation type="journal article" date="2007" name="Nat. Biotechnol.">
        <title>Comparative analysis of the complete genome sequence of the plant growth-promoting bacterium Bacillus amyloliquefaciens FZB42.</title>
        <authorList>
            <person name="Chen X.H."/>
            <person name="Koumoutsi A."/>
            <person name="Scholz R."/>
            <person name="Eisenreich A."/>
            <person name="Schneider K."/>
            <person name="Heinemeyer I."/>
            <person name="Morgenstern B."/>
            <person name="Voss B."/>
            <person name="Hess W.R."/>
            <person name="Reva O."/>
            <person name="Junge H."/>
            <person name="Voigt B."/>
            <person name="Jungblut P.R."/>
            <person name="Vater J."/>
            <person name="Suessmuth R."/>
            <person name="Liesegang H."/>
            <person name="Strittmatter A."/>
            <person name="Gottschalk G."/>
            <person name="Borriss R."/>
        </authorList>
    </citation>
    <scope>NUCLEOTIDE SEQUENCE [LARGE SCALE GENOMIC DNA]</scope>
    <source>
        <strain>DSM 23117 / BGSC 10A6 / LMG 26770 / FZB42</strain>
    </source>
</reference>